<evidence type="ECO:0000250" key="1"/>
<evidence type="ECO:0000250" key="2">
    <source>
        <dbReference type="UniProtKB" id="P56406"/>
    </source>
</evidence>
<evidence type="ECO:0000255" key="3"/>
<evidence type="ECO:0000269" key="4">
    <source>
    </source>
</evidence>
<evidence type="ECO:0000305" key="5"/>
<reference key="1">
    <citation type="journal article" date="1992" name="J. Bacteriol.">
        <title>Cloning and sequencing of a gene encoding a novel extracellular neutral proteinase from Streptomyces sp. strain C5 and expression of the gene in Streptomyces lividans 1326.</title>
        <authorList>
            <person name="Lampel J.S."/>
            <person name="Aphale J.S."/>
            <person name="Lampel K.A."/>
            <person name="Strohl W.R."/>
        </authorList>
    </citation>
    <scope>NUCLEOTIDE SEQUENCE [GENOMIC DNA]</scope>
    <scope>PROTEIN SEQUENCE OF 82-101</scope>
</reference>
<dbReference type="EC" id="3.4.24.77"/>
<dbReference type="EMBL" id="M86606">
    <property type="status" value="NOT_ANNOTATED_CDS"/>
    <property type="molecule type" value="Genomic_DNA"/>
</dbReference>
<dbReference type="SMR" id="P43163"/>
<dbReference type="MEROPS" id="M07.001"/>
<dbReference type="GO" id="GO:0005576">
    <property type="term" value="C:extracellular region"/>
    <property type="evidence" value="ECO:0007669"/>
    <property type="project" value="UniProtKB-SubCell"/>
</dbReference>
<dbReference type="GO" id="GO:0004222">
    <property type="term" value="F:metalloendopeptidase activity"/>
    <property type="evidence" value="ECO:0007669"/>
    <property type="project" value="InterPro"/>
</dbReference>
<dbReference type="GO" id="GO:0008270">
    <property type="term" value="F:zinc ion binding"/>
    <property type="evidence" value="ECO:0007669"/>
    <property type="project" value="InterPro"/>
</dbReference>
<dbReference type="GO" id="GO:0006508">
    <property type="term" value="P:proteolysis"/>
    <property type="evidence" value="ECO:0007669"/>
    <property type="project" value="UniProtKB-KW"/>
</dbReference>
<dbReference type="Gene3D" id="3.40.390.10">
    <property type="entry name" value="Collagenase (Catalytic Domain)"/>
    <property type="match status" value="1"/>
</dbReference>
<dbReference type="InterPro" id="IPR024079">
    <property type="entry name" value="MetalloPept_cat_dom_sf"/>
</dbReference>
<dbReference type="InterPro" id="IPR000013">
    <property type="entry name" value="Peptidase_M7"/>
</dbReference>
<dbReference type="NCBIfam" id="NF033628">
    <property type="entry name" value="snapalysin"/>
    <property type="match status" value="1"/>
</dbReference>
<dbReference type="Pfam" id="PF02031">
    <property type="entry name" value="Peptidase_M7"/>
    <property type="match status" value="1"/>
</dbReference>
<dbReference type="PIRSF" id="PIRSF016573">
    <property type="entry name" value="Peptidase_M7"/>
    <property type="match status" value="1"/>
</dbReference>
<dbReference type="PRINTS" id="PR00787">
    <property type="entry name" value="NEUTRALPTASE"/>
</dbReference>
<dbReference type="SUPFAM" id="SSF55486">
    <property type="entry name" value="Metalloproteases ('zincins'), catalytic domain"/>
    <property type="match status" value="1"/>
</dbReference>
<gene>
    <name type="primary">snpA</name>
</gene>
<proteinExistence type="evidence at protein level"/>
<sequence length="229" mass="23607">MRMPLSVLTAAGLSLATLGLGTAGPASATPTAEGAPVVAYDGSPSAGSPADAKAEAAANRAFFEAVLRSVAEKRAANPKSTAAVTVVYNASGAPSFATQIARGTQIWNSSVSNVRLQAGSSGVDFTYREGNDPRGSYASTDGHGRGYIFLDYRQNQTYDSTRVTAHETGHVLGLPDHYSGPCSELMSGGGPGPSCTNAYPNSAERSRVNQLWANGFAAAMDKALEKSAR</sequence>
<feature type="signal peptide" evidence="3">
    <location>
        <begin position="1"/>
        <end position="28"/>
    </location>
</feature>
<feature type="propeptide" id="PRO_0000028650" evidence="4">
    <location>
        <begin position="29"/>
        <end position="81"/>
    </location>
</feature>
<feature type="chain" id="PRO_0000028651" description="Extracellular small neutral protease">
    <location>
        <begin position="82"/>
        <end position="229"/>
    </location>
</feature>
<feature type="active site" evidence="1">
    <location>
        <position position="167"/>
    </location>
</feature>
<feature type="binding site" evidence="2">
    <location>
        <position position="159"/>
    </location>
    <ligand>
        <name>Ca(2+)</name>
        <dbReference type="ChEBI" id="CHEBI:29108"/>
    </ligand>
</feature>
<feature type="binding site" evidence="2">
    <location>
        <position position="161"/>
    </location>
    <ligand>
        <name>Ca(2+)</name>
        <dbReference type="ChEBI" id="CHEBI:29108"/>
    </ligand>
</feature>
<feature type="binding site" evidence="2">
    <location>
        <position position="166"/>
    </location>
    <ligand>
        <name>Zn(2+)</name>
        <dbReference type="ChEBI" id="CHEBI:29105"/>
        <note>catalytic</note>
    </ligand>
</feature>
<feature type="binding site" evidence="2">
    <location>
        <position position="170"/>
    </location>
    <ligand>
        <name>Zn(2+)</name>
        <dbReference type="ChEBI" id="CHEBI:29105"/>
        <note>catalytic</note>
    </ligand>
</feature>
<feature type="binding site" evidence="2">
    <location>
        <position position="176"/>
    </location>
    <ligand>
        <name>Zn(2+)</name>
        <dbReference type="ChEBI" id="CHEBI:29105"/>
        <note>catalytic</note>
    </ligand>
</feature>
<feature type="disulfide bond" evidence="2">
    <location>
        <begin position="182"/>
        <end position="195"/>
    </location>
</feature>
<accession>P43163</accession>
<keyword id="KW-0106">Calcium</keyword>
<keyword id="KW-0903">Direct protein sequencing</keyword>
<keyword id="KW-1015">Disulfide bond</keyword>
<keyword id="KW-0378">Hydrolase</keyword>
<keyword id="KW-0479">Metal-binding</keyword>
<keyword id="KW-0482">Metalloprotease</keyword>
<keyword id="KW-0645">Protease</keyword>
<keyword id="KW-0964">Secreted</keyword>
<keyword id="KW-0732">Signal</keyword>
<keyword id="KW-0862">Zinc</keyword>
<keyword id="KW-0865">Zymogen</keyword>
<name>SNPA_STRS5</name>
<protein>
    <recommendedName>
        <fullName>Extracellular small neutral protease</fullName>
        <ecNumber>3.4.24.77</ecNumber>
    </recommendedName>
    <alternativeName>
        <fullName>Snapalysin</fullName>
    </alternativeName>
</protein>
<comment type="function">
    <text>Milk hydrolyzing.</text>
</comment>
<comment type="catalytic activity">
    <reaction>
        <text>Hydrolyzes proteins with a preference for Tyr or Phe in the P1' position. Has no action on amino-acid p-nitroanilides.</text>
        <dbReference type="EC" id="3.4.24.77"/>
    </reaction>
</comment>
<comment type="cofactor">
    <cofactor evidence="1">
        <name>Ca(2+)</name>
        <dbReference type="ChEBI" id="CHEBI:29108"/>
    </cofactor>
    <text evidence="1">Binds 1 Ca(2+) ion per subunit.</text>
</comment>
<comment type="cofactor">
    <cofactor evidence="1">
        <name>Zn(2+)</name>
        <dbReference type="ChEBI" id="CHEBI:29105"/>
    </cofactor>
    <text evidence="1">Binds 1 zinc ion per subunit.</text>
</comment>
<comment type="biophysicochemical properties">
    <phDependence>
        <text>Optimum pH is 7.0.</text>
    </phDependence>
    <temperatureDependence>
        <text>Optimum temperature is 55 degrees Celsius.</text>
    </temperatureDependence>
</comment>
<comment type="subunit">
    <text>Monomer.</text>
</comment>
<comment type="subcellular location">
    <subcellularLocation>
        <location>Secreted</location>
    </subcellularLocation>
</comment>
<comment type="similarity">
    <text evidence="5">Belongs to the peptidase M7 family.</text>
</comment>
<organism>
    <name type="scientific">Streptomyces sp. (strain C5)</name>
    <dbReference type="NCBI Taxonomy" id="45212"/>
    <lineage>
        <taxon>Bacteria</taxon>
        <taxon>Bacillati</taxon>
        <taxon>Actinomycetota</taxon>
        <taxon>Actinomycetes</taxon>
        <taxon>Kitasatosporales</taxon>
        <taxon>Streptomycetaceae</taxon>
        <taxon>Streptomyces</taxon>
    </lineage>
</organism>